<accession>A2SQ57</accession>
<reference key="1">
    <citation type="journal article" date="2009" name="Stand. Genomic Sci.">
        <title>Complete genome sequence of Methanocorpusculum labreanum type strain Z.</title>
        <authorList>
            <person name="Anderson I.J."/>
            <person name="Sieprawska-Lupa M."/>
            <person name="Goltsman E."/>
            <person name="Lapidus A."/>
            <person name="Copeland A."/>
            <person name="Glavina Del Rio T."/>
            <person name="Tice H."/>
            <person name="Dalin E."/>
            <person name="Barry K."/>
            <person name="Pitluck S."/>
            <person name="Hauser L."/>
            <person name="Land M."/>
            <person name="Lucas S."/>
            <person name="Richardson P."/>
            <person name="Whitman W.B."/>
            <person name="Kyrpides N.C."/>
        </authorList>
    </citation>
    <scope>NUCLEOTIDE SEQUENCE [LARGE SCALE GENOMIC DNA]</scope>
    <source>
        <strain>ATCC 43576 / DSM 4855 / Z</strain>
    </source>
</reference>
<feature type="chain" id="PRO_1000133501" description="Small ribosomal subunit protein eS1">
    <location>
        <begin position="1"/>
        <end position="206"/>
    </location>
</feature>
<organism>
    <name type="scientific">Methanocorpusculum labreanum (strain ATCC 43576 / DSM 4855 / Z)</name>
    <dbReference type="NCBI Taxonomy" id="410358"/>
    <lineage>
        <taxon>Archaea</taxon>
        <taxon>Methanobacteriati</taxon>
        <taxon>Methanobacteriota</taxon>
        <taxon>Stenosarchaea group</taxon>
        <taxon>Methanomicrobia</taxon>
        <taxon>Methanomicrobiales</taxon>
        <taxon>Methanocorpusculaceae</taxon>
        <taxon>Methanocorpusculum</taxon>
    </lineage>
</organism>
<comment type="similarity">
    <text evidence="1">Belongs to the eukaryotic ribosomal protein eS1 family.</text>
</comment>
<gene>
    <name evidence="1" type="primary">rps3ae</name>
    <name type="ordered locus">Mlab_0287</name>
</gene>
<proteinExistence type="inferred from homology"/>
<dbReference type="EMBL" id="CP000559">
    <property type="protein sequence ID" value="ABN06463.1"/>
    <property type="molecule type" value="Genomic_DNA"/>
</dbReference>
<dbReference type="RefSeq" id="WP_011832664.1">
    <property type="nucleotide sequence ID" value="NC_008942.1"/>
</dbReference>
<dbReference type="SMR" id="A2SQ57"/>
<dbReference type="STRING" id="410358.Mlab_0287"/>
<dbReference type="GeneID" id="4795355"/>
<dbReference type="KEGG" id="mla:Mlab_0287"/>
<dbReference type="eggNOG" id="arCOG04186">
    <property type="taxonomic scope" value="Archaea"/>
</dbReference>
<dbReference type="HOGENOM" id="CLU_062507_1_0_2"/>
<dbReference type="OrthoDB" id="30639at2157"/>
<dbReference type="Proteomes" id="UP000000365">
    <property type="component" value="Chromosome"/>
</dbReference>
<dbReference type="GO" id="GO:1990904">
    <property type="term" value="C:ribonucleoprotein complex"/>
    <property type="evidence" value="ECO:0007669"/>
    <property type="project" value="UniProtKB-KW"/>
</dbReference>
<dbReference type="GO" id="GO:0005840">
    <property type="term" value="C:ribosome"/>
    <property type="evidence" value="ECO:0007669"/>
    <property type="project" value="UniProtKB-KW"/>
</dbReference>
<dbReference type="GO" id="GO:0003735">
    <property type="term" value="F:structural constituent of ribosome"/>
    <property type="evidence" value="ECO:0007669"/>
    <property type="project" value="InterPro"/>
</dbReference>
<dbReference type="GO" id="GO:0006412">
    <property type="term" value="P:translation"/>
    <property type="evidence" value="ECO:0007669"/>
    <property type="project" value="UniProtKB-UniRule"/>
</dbReference>
<dbReference type="HAMAP" id="MF_00359">
    <property type="entry name" value="Ribosomal_eS1"/>
    <property type="match status" value="1"/>
</dbReference>
<dbReference type="InterPro" id="IPR001593">
    <property type="entry name" value="Ribosomal_eS1"/>
</dbReference>
<dbReference type="InterPro" id="IPR030838">
    <property type="entry name" value="Ribosomal_eS1_arc"/>
</dbReference>
<dbReference type="NCBIfam" id="NF003142">
    <property type="entry name" value="PRK04057.1"/>
    <property type="match status" value="1"/>
</dbReference>
<dbReference type="Pfam" id="PF01015">
    <property type="entry name" value="Ribosomal_S3Ae"/>
    <property type="match status" value="1"/>
</dbReference>
<dbReference type="SMART" id="SM01397">
    <property type="entry name" value="Ribosomal_S3Ae"/>
    <property type="match status" value="1"/>
</dbReference>
<protein>
    <recommendedName>
        <fullName evidence="1">Small ribosomal subunit protein eS1</fullName>
    </recommendedName>
    <alternativeName>
        <fullName evidence="2">30S ribosomal protein S3Ae</fullName>
    </alternativeName>
    <alternativeName>
        <fullName evidence="1">Ribosomal protein S1e</fullName>
    </alternativeName>
</protein>
<evidence type="ECO:0000255" key="1">
    <source>
        <dbReference type="HAMAP-Rule" id="MF_00359"/>
    </source>
</evidence>
<evidence type="ECO:0000305" key="2"/>
<name>RS3A_METLZ</name>
<sequence>MARKKQSGGRKVEGWKAKNWYKVHAPEFLGKQFIGEIISSNPENVPGRVLTVSLGELIQDYSKQNVRASFKIMNVAGDAAYTQFNGHEMTKEFVRAMVKKRASRVDSTITVTPLGSTRELQVTITAFTINHARLSQVQELRAKMVKVVEDSAKEADFESFVSAMLKGELSKKMFAECKPIFPVRRIEIIKSESVSSAADRAAALIR</sequence>
<keyword id="KW-1185">Reference proteome</keyword>
<keyword id="KW-0687">Ribonucleoprotein</keyword>
<keyword id="KW-0689">Ribosomal protein</keyword>